<organism>
    <name type="scientific">Photorhabdus laumondii subsp. laumondii (strain DSM 15139 / CIP 105565 / TT01)</name>
    <name type="common">Photorhabdus luminescens subsp. laumondii</name>
    <dbReference type="NCBI Taxonomy" id="243265"/>
    <lineage>
        <taxon>Bacteria</taxon>
        <taxon>Pseudomonadati</taxon>
        <taxon>Pseudomonadota</taxon>
        <taxon>Gammaproteobacteria</taxon>
        <taxon>Enterobacterales</taxon>
        <taxon>Morganellaceae</taxon>
        <taxon>Photorhabdus</taxon>
    </lineage>
</organism>
<reference key="1">
    <citation type="journal article" date="2003" name="Nat. Biotechnol.">
        <title>The genome sequence of the entomopathogenic bacterium Photorhabdus luminescens.</title>
        <authorList>
            <person name="Duchaud E."/>
            <person name="Rusniok C."/>
            <person name="Frangeul L."/>
            <person name="Buchrieser C."/>
            <person name="Givaudan A."/>
            <person name="Taourit S."/>
            <person name="Bocs S."/>
            <person name="Boursaux-Eude C."/>
            <person name="Chandler M."/>
            <person name="Charles J.-F."/>
            <person name="Dassa E."/>
            <person name="Derose R."/>
            <person name="Derzelle S."/>
            <person name="Freyssinet G."/>
            <person name="Gaudriault S."/>
            <person name="Medigue C."/>
            <person name="Lanois A."/>
            <person name="Powell K."/>
            <person name="Siguier P."/>
            <person name="Vincent R."/>
            <person name="Wingate V."/>
            <person name="Zouine M."/>
            <person name="Glaser P."/>
            <person name="Boemare N."/>
            <person name="Danchin A."/>
            <person name="Kunst F."/>
        </authorList>
    </citation>
    <scope>NUCLEOTIDE SEQUENCE [LARGE SCALE GENOMIC DNA]</scope>
    <source>
        <strain>DSM 15139 / CIP 105565 / TT01</strain>
    </source>
</reference>
<dbReference type="EC" id="1.14.12.17" evidence="1"/>
<dbReference type="EMBL" id="BX571870">
    <property type="protein sequence ID" value="CAE15666.1"/>
    <property type="molecule type" value="Genomic_DNA"/>
</dbReference>
<dbReference type="SMR" id="Q7N215"/>
<dbReference type="STRING" id="243265.plu3292"/>
<dbReference type="KEGG" id="plu:plu3292"/>
<dbReference type="eggNOG" id="COG1017">
    <property type="taxonomic scope" value="Bacteria"/>
</dbReference>
<dbReference type="eggNOG" id="COG1018">
    <property type="taxonomic scope" value="Bacteria"/>
</dbReference>
<dbReference type="HOGENOM" id="CLU_003827_12_0_6"/>
<dbReference type="OrthoDB" id="9801223at2"/>
<dbReference type="Proteomes" id="UP000002514">
    <property type="component" value="Chromosome"/>
</dbReference>
<dbReference type="GO" id="GO:0071949">
    <property type="term" value="F:FAD binding"/>
    <property type="evidence" value="ECO:0007669"/>
    <property type="project" value="InterPro"/>
</dbReference>
<dbReference type="GO" id="GO:0020037">
    <property type="term" value="F:heme binding"/>
    <property type="evidence" value="ECO:0007669"/>
    <property type="project" value="InterPro"/>
</dbReference>
<dbReference type="GO" id="GO:0046872">
    <property type="term" value="F:metal ion binding"/>
    <property type="evidence" value="ECO:0007669"/>
    <property type="project" value="UniProtKB-KW"/>
</dbReference>
<dbReference type="GO" id="GO:0008941">
    <property type="term" value="F:nitric oxide dioxygenase NAD(P)H activity"/>
    <property type="evidence" value="ECO:0007669"/>
    <property type="project" value="UniProtKB-UniRule"/>
</dbReference>
<dbReference type="GO" id="GO:0019825">
    <property type="term" value="F:oxygen binding"/>
    <property type="evidence" value="ECO:0007669"/>
    <property type="project" value="InterPro"/>
</dbReference>
<dbReference type="GO" id="GO:0005344">
    <property type="term" value="F:oxygen carrier activity"/>
    <property type="evidence" value="ECO:0007669"/>
    <property type="project" value="UniProtKB-UniRule"/>
</dbReference>
<dbReference type="GO" id="GO:0071500">
    <property type="term" value="P:cellular response to nitrosative stress"/>
    <property type="evidence" value="ECO:0007669"/>
    <property type="project" value="TreeGrafter"/>
</dbReference>
<dbReference type="GO" id="GO:0046210">
    <property type="term" value="P:nitric oxide catabolic process"/>
    <property type="evidence" value="ECO:0007669"/>
    <property type="project" value="TreeGrafter"/>
</dbReference>
<dbReference type="GO" id="GO:0009636">
    <property type="term" value="P:response to toxic substance"/>
    <property type="evidence" value="ECO:0007669"/>
    <property type="project" value="UniProtKB-KW"/>
</dbReference>
<dbReference type="CDD" id="cd06184">
    <property type="entry name" value="flavohem_like_fad_nad_binding"/>
    <property type="match status" value="1"/>
</dbReference>
<dbReference type="CDD" id="cd14776">
    <property type="entry name" value="HmpEc-globin-like"/>
    <property type="match status" value="1"/>
</dbReference>
<dbReference type="FunFam" id="1.10.490.10:FF:000003">
    <property type="entry name" value="Flavohemoprotein"/>
    <property type="match status" value="1"/>
</dbReference>
<dbReference type="FunFam" id="2.40.30.10:FF:000034">
    <property type="entry name" value="Flavohemoprotein"/>
    <property type="match status" value="1"/>
</dbReference>
<dbReference type="FunFam" id="3.40.50.80:FF:000010">
    <property type="entry name" value="Flavohemoprotein"/>
    <property type="match status" value="1"/>
</dbReference>
<dbReference type="Gene3D" id="1.10.490.10">
    <property type="entry name" value="Globins"/>
    <property type="match status" value="1"/>
</dbReference>
<dbReference type="Gene3D" id="3.40.50.80">
    <property type="entry name" value="Nucleotide-binding domain of ferredoxin-NADP reductase (FNR) module"/>
    <property type="match status" value="1"/>
</dbReference>
<dbReference type="Gene3D" id="2.40.30.10">
    <property type="entry name" value="Translation factors"/>
    <property type="match status" value="1"/>
</dbReference>
<dbReference type="HAMAP" id="MF_01252">
    <property type="entry name" value="Hmp"/>
    <property type="match status" value="1"/>
</dbReference>
<dbReference type="InterPro" id="IPR008333">
    <property type="entry name" value="Cbr1-like_FAD-bd_dom"/>
</dbReference>
<dbReference type="InterPro" id="IPR017927">
    <property type="entry name" value="FAD-bd_FR_type"/>
</dbReference>
<dbReference type="InterPro" id="IPR001709">
    <property type="entry name" value="Flavoprot_Pyr_Nucl_cyt_Rdtase"/>
</dbReference>
<dbReference type="InterPro" id="IPR039261">
    <property type="entry name" value="FNR_nucleotide-bd"/>
</dbReference>
<dbReference type="InterPro" id="IPR000971">
    <property type="entry name" value="Globin"/>
</dbReference>
<dbReference type="InterPro" id="IPR009050">
    <property type="entry name" value="Globin-like_sf"/>
</dbReference>
<dbReference type="InterPro" id="IPR012292">
    <property type="entry name" value="Globin/Proto"/>
</dbReference>
<dbReference type="InterPro" id="IPR023950">
    <property type="entry name" value="Hmp"/>
</dbReference>
<dbReference type="InterPro" id="IPR001433">
    <property type="entry name" value="OxRdtase_FAD/NAD-bd"/>
</dbReference>
<dbReference type="InterPro" id="IPR017938">
    <property type="entry name" value="Riboflavin_synthase-like_b-brl"/>
</dbReference>
<dbReference type="NCBIfam" id="NF009805">
    <property type="entry name" value="PRK13289.1"/>
    <property type="match status" value="1"/>
</dbReference>
<dbReference type="PANTHER" id="PTHR43396">
    <property type="entry name" value="FLAVOHEMOPROTEIN"/>
    <property type="match status" value="1"/>
</dbReference>
<dbReference type="PANTHER" id="PTHR43396:SF3">
    <property type="entry name" value="FLAVOHEMOPROTEIN"/>
    <property type="match status" value="1"/>
</dbReference>
<dbReference type="Pfam" id="PF00970">
    <property type="entry name" value="FAD_binding_6"/>
    <property type="match status" value="1"/>
</dbReference>
<dbReference type="Pfam" id="PF00042">
    <property type="entry name" value="Globin"/>
    <property type="match status" value="1"/>
</dbReference>
<dbReference type="Pfam" id="PF00175">
    <property type="entry name" value="NAD_binding_1"/>
    <property type="match status" value="1"/>
</dbReference>
<dbReference type="PRINTS" id="PR00371">
    <property type="entry name" value="FPNCR"/>
</dbReference>
<dbReference type="PRINTS" id="PR00410">
    <property type="entry name" value="PHEHYDRXLASE"/>
</dbReference>
<dbReference type="SUPFAM" id="SSF52343">
    <property type="entry name" value="Ferredoxin reductase-like, C-terminal NADP-linked domain"/>
    <property type="match status" value="1"/>
</dbReference>
<dbReference type="SUPFAM" id="SSF46458">
    <property type="entry name" value="Globin-like"/>
    <property type="match status" value="1"/>
</dbReference>
<dbReference type="SUPFAM" id="SSF63380">
    <property type="entry name" value="Riboflavin synthase domain-like"/>
    <property type="match status" value="1"/>
</dbReference>
<dbReference type="PROSITE" id="PS51384">
    <property type="entry name" value="FAD_FR"/>
    <property type="match status" value="1"/>
</dbReference>
<dbReference type="PROSITE" id="PS01033">
    <property type="entry name" value="GLOBIN"/>
    <property type="match status" value="1"/>
</dbReference>
<sequence length="396" mass="44961">MLDNQTIATVKSTIPLLSATGPKLTAHFYERMFKHNPELKNIFNMSHQLNGDQREALFNAICAYAANIDNLKVLLPAVEKIAHKHASLNIQPEHYQIVGTHLLATLNEMFQPGNEILDAWGKAYGVLADIFINREEQIYHSGELTDGGWRGLRPFRINRKEVKSEVICSFEFAPQDGGKVMDYKPGQYLSIYLQDDSFANREIRQYSLTAAPNGSSYRIAIKREPQGIVSNHMHDKMQEGDTVWLTAPRGDFFLDIKPETPVTLISAGVGLTPMMSMLYHLHQQNHNSPINWLHAAEHGGHHAFSHEVAAIAQAMPNFAGTIWYREPRDEDQQGIHYQHKGFMDLTVLNEALKTEGMHFYFCGPVAFMQYVAKQLLDMGIDKQFIHYECFGPHKVI</sequence>
<feature type="chain" id="PRO_0000052437" description="Flavohemoprotein">
    <location>
        <begin position="1"/>
        <end position="396"/>
    </location>
</feature>
<feature type="domain" description="Globin" evidence="2">
    <location>
        <begin position="1"/>
        <end position="136"/>
    </location>
</feature>
<feature type="domain" description="FAD-binding FR-type" evidence="1">
    <location>
        <begin position="150"/>
        <end position="255"/>
    </location>
</feature>
<feature type="region of interest" description="Reductase">
    <location>
        <begin position="147"/>
        <end position="396"/>
    </location>
</feature>
<feature type="active site" description="Charge relay system" evidence="1">
    <location>
        <position position="95"/>
    </location>
</feature>
<feature type="active site" description="Charge relay system" evidence="1">
    <location>
        <position position="135"/>
    </location>
</feature>
<feature type="binding site" description="proximal binding residue" evidence="1">
    <location>
        <position position="85"/>
    </location>
    <ligand>
        <name>heme b</name>
        <dbReference type="ChEBI" id="CHEBI:60344"/>
    </ligand>
    <ligandPart>
        <name>Fe</name>
        <dbReference type="ChEBI" id="CHEBI:18248"/>
    </ligandPart>
</feature>
<feature type="binding site" evidence="1">
    <location>
        <position position="188"/>
    </location>
    <ligand>
        <name>FAD</name>
        <dbReference type="ChEBI" id="CHEBI:57692"/>
    </ligand>
</feature>
<feature type="binding site" evidence="1">
    <location>
        <begin position="204"/>
        <end position="207"/>
    </location>
    <ligand>
        <name>FAD</name>
        <dbReference type="ChEBI" id="CHEBI:57692"/>
    </ligand>
</feature>
<feature type="binding site" evidence="1">
    <location>
        <begin position="268"/>
        <end position="273"/>
    </location>
    <ligand>
        <name>NADP(+)</name>
        <dbReference type="ChEBI" id="CHEBI:58349"/>
    </ligand>
</feature>
<feature type="binding site" evidence="1">
    <location>
        <begin position="389"/>
        <end position="392"/>
    </location>
    <ligand>
        <name>FAD</name>
        <dbReference type="ChEBI" id="CHEBI:57692"/>
    </ligand>
</feature>
<feature type="site" description="Involved in heme-bound ligand stabilization and O-O bond activation" evidence="1">
    <location>
        <position position="29"/>
    </location>
</feature>
<feature type="site" description="Influences the redox potential of the prosthetic heme and FAD groups" evidence="1">
    <location>
        <position position="84"/>
    </location>
</feature>
<feature type="site" description="Influences the redox potential of the prosthetic heme and FAD groups" evidence="1">
    <location>
        <position position="388"/>
    </location>
</feature>
<evidence type="ECO:0000255" key="1">
    <source>
        <dbReference type="HAMAP-Rule" id="MF_01252"/>
    </source>
</evidence>
<evidence type="ECO:0000255" key="2">
    <source>
        <dbReference type="PROSITE-ProRule" id="PRU00238"/>
    </source>
</evidence>
<gene>
    <name evidence="1" type="primary">hmp</name>
    <name type="synonym">hmpA</name>
    <name type="ordered locus">plu3292</name>
</gene>
<proteinExistence type="inferred from homology"/>
<protein>
    <recommendedName>
        <fullName evidence="1">Flavohemoprotein</fullName>
    </recommendedName>
    <alternativeName>
        <fullName evidence="1">Flavohemoglobin</fullName>
    </alternativeName>
    <alternativeName>
        <fullName evidence="1">Hemoglobin-like protein</fullName>
    </alternativeName>
    <alternativeName>
        <fullName evidence="1">Nitric oxide dioxygenase</fullName>
        <shortName evidence="1">NO oxygenase</shortName>
        <shortName evidence="1">NOD</shortName>
        <ecNumber evidence="1">1.14.12.17</ecNumber>
    </alternativeName>
</protein>
<keyword id="KW-0216">Detoxification</keyword>
<keyword id="KW-0274">FAD</keyword>
<keyword id="KW-0285">Flavoprotein</keyword>
<keyword id="KW-0349">Heme</keyword>
<keyword id="KW-0408">Iron</keyword>
<keyword id="KW-0479">Metal-binding</keyword>
<keyword id="KW-0520">NAD</keyword>
<keyword id="KW-0521">NADP</keyword>
<keyword id="KW-0560">Oxidoreductase</keyword>
<keyword id="KW-0561">Oxygen transport</keyword>
<keyword id="KW-1185">Reference proteome</keyword>
<keyword id="KW-0813">Transport</keyword>
<accession>Q7N215</accession>
<comment type="function">
    <text evidence="1">Is involved in NO detoxification in an aerobic process, termed nitric oxide dioxygenase (NOD) reaction that utilizes O(2) and NAD(P)H to convert NO to nitrate, which protects the bacterium from various noxious nitrogen compounds. Therefore, plays a central role in the inducible response to nitrosative stress.</text>
</comment>
<comment type="catalytic activity">
    <reaction evidence="1">
        <text>2 nitric oxide + NADPH + 2 O2 = 2 nitrate + NADP(+) + H(+)</text>
        <dbReference type="Rhea" id="RHEA:19465"/>
        <dbReference type="ChEBI" id="CHEBI:15378"/>
        <dbReference type="ChEBI" id="CHEBI:15379"/>
        <dbReference type="ChEBI" id="CHEBI:16480"/>
        <dbReference type="ChEBI" id="CHEBI:17632"/>
        <dbReference type="ChEBI" id="CHEBI:57783"/>
        <dbReference type="ChEBI" id="CHEBI:58349"/>
        <dbReference type="EC" id="1.14.12.17"/>
    </reaction>
</comment>
<comment type="catalytic activity">
    <reaction evidence="1">
        <text>2 nitric oxide + NADH + 2 O2 = 2 nitrate + NAD(+) + H(+)</text>
        <dbReference type="Rhea" id="RHEA:19469"/>
        <dbReference type="ChEBI" id="CHEBI:15378"/>
        <dbReference type="ChEBI" id="CHEBI:15379"/>
        <dbReference type="ChEBI" id="CHEBI:16480"/>
        <dbReference type="ChEBI" id="CHEBI:17632"/>
        <dbReference type="ChEBI" id="CHEBI:57540"/>
        <dbReference type="ChEBI" id="CHEBI:57945"/>
        <dbReference type="EC" id="1.14.12.17"/>
    </reaction>
</comment>
<comment type="cofactor">
    <cofactor evidence="1">
        <name>heme b</name>
        <dbReference type="ChEBI" id="CHEBI:60344"/>
    </cofactor>
    <text evidence="1">Binds 1 heme b (iron(II)-protoporphyrin IX) group per subunit.</text>
</comment>
<comment type="cofactor">
    <cofactor evidence="1">
        <name>FAD</name>
        <dbReference type="ChEBI" id="CHEBI:57692"/>
    </cofactor>
    <text evidence="1">Binds 1 FAD per subunit.</text>
</comment>
<comment type="domain">
    <text>Consists of two distinct domains; an N-terminal heme-containing oxygen-binding domain and a C-terminal reductase domain with binding sites for FAD and NAD(P)H.</text>
</comment>
<comment type="similarity">
    <text evidence="1">Belongs to the globin family. Two-domain flavohemoproteins subfamily.</text>
</comment>
<comment type="similarity">
    <text evidence="1">In the C-terminal section; belongs to the flavoprotein pyridine nucleotide cytochrome reductase family.</text>
</comment>
<name>HMP_PHOLL</name>